<sequence length="719" mass="78681">MSDISVEKLTELEAAAELERLARAIAHHDELYHAKDRPEISDAAYDALKRRNEAIEAHFPALVRDDSPSRRVGAAPALATFAPVVHARPMLSLDNAFSDEDVRDFVGSVYRFLGQLPDDSIAFTAEPKIDGLSMSIRYENGILVSGATRGDGTTGENVTANIRTIAEIPNRLPAGAPAVVEVRGEVYMAKSDFLTLNAQMEAEGKQTYVNPRNTAAGSLRQLDAKVTASRKLRFFAYAWGEMSDMPADTQLGMVEVFRQWGFPVNPLMKRFNSVDGLLAHYRAIGMERPTLDYDIDGVVYKVDRLDLQTRLGFRSRSPRWAIAHKFPAEQALTILRGIDIQVGRTGALTPVARLEPITVGGVVVTNATLHNEDYIKGIGQKGEPIREGRDIRIGDSVIVQRAGDVIPQIVDVVLEEGKKRGEPYQFPHVCPACGSHAVREEGEAVRRCTGGLICPAQAVERIRHFVSRNAFDIEGLGEKQVEFFFNAEDPALCIRSPADIFTLKKRQENSLTKLQNIEGFGATSVKKLYDAIDARREIALHRFLFGLGIRHVGEVNAKRLARAYLSYAAFEKAALEAVPPKEGDRTDKGSEAWQDMLAVEGIGSIVAEAVVDFYGEPHNREVLAALLAEVTPLDEEARVATGSPVEGKTVVFTGSLERMSRDEAKAMAERHGAKTAGSVSKKTDLVVAGPGAGSKLAKATELGIEVINEDDWFKLVGED</sequence>
<gene>
    <name evidence="1" type="primary">ligA</name>
    <name type="ordered locus">BSUIS_A1471</name>
</gene>
<dbReference type="EC" id="6.5.1.2" evidence="1"/>
<dbReference type="EMBL" id="CP000911">
    <property type="protein sequence ID" value="ABY38509.1"/>
    <property type="molecule type" value="Genomic_DNA"/>
</dbReference>
<dbReference type="RefSeq" id="WP_002964528.1">
    <property type="nucleotide sequence ID" value="NC_010169.1"/>
</dbReference>
<dbReference type="SMR" id="B0CHK8"/>
<dbReference type="GeneID" id="93016281"/>
<dbReference type="KEGG" id="bmt:BSUIS_A1471"/>
<dbReference type="HOGENOM" id="CLU_007764_2_0_5"/>
<dbReference type="Proteomes" id="UP000008545">
    <property type="component" value="Chromosome I"/>
</dbReference>
<dbReference type="GO" id="GO:0005829">
    <property type="term" value="C:cytosol"/>
    <property type="evidence" value="ECO:0007669"/>
    <property type="project" value="TreeGrafter"/>
</dbReference>
<dbReference type="GO" id="GO:0003911">
    <property type="term" value="F:DNA ligase (NAD+) activity"/>
    <property type="evidence" value="ECO:0007669"/>
    <property type="project" value="UniProtKB-UniRule"/>
</dbReference>
<dbReference type="GO" id="GO:0046872">
    <property type="term" value="F:metal ion binding"/>
    <property type="evidence" value="ECO:0007669"/>
    <property type="project" value="UniProtKB-KW"/>
</dbReference>
<dbReference type="GO" id="GO:0006281">
    <property type="term" value="P:DNA repair"/>
    <property type="evidence" value="ECO:0007669"/>
    <property type="project" value="UniProtKB-KW"/>
</dbReference>
<dbReference type="GO" id="GO:0006260">
    <property type="term" value="P:DNA replication"/>
    <property type="evidence" value="ECO:0007669"/>
    <property type="project" value="UniProtKB-KW"/>
</dbReference>
<dbReference type="CDD" id="cd17748">
    <property type="entry name" value="BRCT_DNA_ligase_like"/>
    <property type="match status" value="1"/>
</dbReference>
<dbReference type="CDD" id="cd00114">
    <property type="entry name" value="LIGANc"/>
    <property type="match status" value="1"/>
</dbReference>
<dbReference type="FunFam" id="3.30.470.30:FF:000001">
    <property type="entry name" value="DNA ligase"/>
    <property type="match status" value="1"/>
</dbReference>
<dbReference type="Gene3D" id="6.20.10.30">
    <property type="match status" value="1"/>
</dbReference>
<dbReference type="Gene3D" id="1.10.150.20">
    <property type="entry name" value="5' to 3' exonuclease, C-terminal subdomain"/>
    <property type="match status" value="2"/>
</dbReference>
<dbReference type="Gene3D" id="3.40.50.10190">
    <property type="entry name" value="BRCT domain"/>
    <property type="match status" value="1"/>
</dbReference>
<dbReference type="Gene3D" id="3.30.470.30">
    <property type="entry name" value="DNA ligase/mRNA capping enzyme"/>
    <property type="match status" value="1"/>
</dbReference>
<dbReference type="Gene3D" id="1.10.287.610">
    <property type="entry name" value="Helix hairpin bin"/>
    <property type="match status" value="1"/>
</dbReference>
<dbReference type="Gene3D" id="2.40.50.140">
    <property type="entry name" value="Nucleic acid-binding proteins"/>
    <property type="match status" value="1"/>
</dbReference>
<dbReference type="HAMAP" id="MF_01588">
    <property type="entry name" value="DNA_ligase_A"/>
    <property type="match status" value="1"/>
</dbReference>
<dbReference type="InterPro" id="IPR001357">
    <property type="entry name" value="BRCT_dom"/>
</dbReference>
<dbReference type="InterPro" id="IPR036420">
    <property type="entry name" value="BRCT_dom_sf"/>
</dbReference>
<dbReference type="InterPro" id="IPR041663">
    <property type="entry name" value="DisA/LigA_HHH"/>
</dbReference>
<dbReference type="InterPro" id="IPR001679">
    <property type="entry name" value="DNA_ligase"/>
</dbReference>
<dbReference type="InterPro" id="IPR018239">
    <property type="entry name" value="DNA_ligase_AS"/>
</dbReference>
<dbReference type="InterPro" id="IPR033136">
    <property type="entry name" value="DNA_ligase_CS"/>
</dbReference>
<dbReference type="InterPro" id="IPR013839">
    <property type="entry name" value="DNAligase_adenylation"/>
</dbReference>
<dbReference type="InterPro" id="IPR013840">
    <property type="entry name" value="DNAligase_N"/>
</dbReference>
<dbReference type="InterPro" id="IPR012340">
    <property type="entry name" value="NA-bd_OB-fold"/>
</dbReference>
<dbReference type="InterPro" id="IPR004150">
    <property type="entry name" value="NAD_DNA_ligase_OB"/>
</dbReference>
<dbReference type="InterPro" id="IPR010994">
    <property type="entry name" value="RuvA_2-like"/>
</dbReference>
<dbReference type="InterPro" id="IPR004149">
    <property type="entry name" value="Znf_DNAligase_C4"/>
</dbReference>
<dbReference type="NCBIfam" id="TIGR00575">
    <property type="entry name" value="dnlj"/>
    <property type="match status" value="1"/>
</dbReference>
<dbReference type="NCBIfam" id="NF005932">
    <property type="entry name" value="PRK07956.1"/>
    <property type="match status" value="1"/>
</dbReference>
<dbReference type="PANTHER" id="PTHR23389">
    <property type="entry name" value="CHROMOSOME TRANSMISSION FIDELITY FACTOR 18"/>
    <property type="match status" value="1"/>
</dbReference>
<dbReference type="PANTHER" id="PTHR23389:SF9">
    <property type="entry name" value="DNA LIGASE"/>
    <property type="match status" value="1"/>
</dbReference>
<dbReference type="Pfam" id="PF00533">
    <property type="entry name" value="BRCT"/>
    <property type="match status" value="1"/>
</dbReference>
<dbReference type="Pfam" id="PF01653">
    <property type="entry name" value="DNA_ligase_aden"/>
    <property type="match status" value="1"/>
</dbReference>
<dbReference type="Pfam" id="PF03120">
    <property type="entry name" value="DNA_ligase_OB"/>
    <property type="match status" value="1"/>
</dbReference>
<dbReference type="Pfam" id="PF03119">
    <property type="entry name" value="DNA_ligase_ZBD"/>
    <property type="match status" value="1"/>
</dbReference>
<dbReference type="Pfam" id="PF12826">
    <property type="entry name" value="HHH_2"/>
    <property type="match status" value="1"/>
</dbReference>
<dbReference type="PIRSF" id="PIRSF001604">
    <property type="entry name" value="LigA"/>
    <property type="match status" value="1"/>
</dbReference>
<dbReference type="SMART" id="SM00292">
    <property type="entry name" value="BRCT"/>
    <property type="match status" value="1"/>
</dbReference>
<dbReference type="SMART" id="SM00532">
    <property type="entry name" value="LIGANc"/>
    <property type="match status" value="1"/>
</dbReference>
<dbReference type="SUPFAM" id="SSF52113">
    <property type="entry name" value="BRCT domain"/>
    <property type="match status" value="1"/>
</dbReference>
<dbReference type="SUPFAM" id="SSF56091">
    <property type="entry name" value="DNA ligase/mRNA capping enzyme, catalytic domain"/>
    <property type="match status" value="1"/>
</dbReference>
<dbReference type="SUPFAM" id="SSF50249">
    <property type="entry name" value="Nucleic acid-binding proteins"/>
    <property type="match status" value="1"/>
</dbReference>
<dbReference type="SUPFAM" id="SSF47781">
    <property type="entry name" value="RuvA domain 2-like"/>
    <property type="match status" value="1"/>
</dbReference>
<dbReference type="PROSITE" id="PS50172">
    <property type="entry name" value="BRCT"/>
    <property type="match status" value="1"/>
</dbReference>
<dbReference type="PROSITE" id="PS01055">
    <property type="entry name" value="DNA_LIGASE_N1"/>
    <property type="match status" value="1"/>
</dbReference>
<dbReference type="PROSITE" id="PS01056">
    <property type="entry name" value="DNA_LIGASE_N2"/>
    <property type="match status" value="1"/>
</dbReference>
<comment type="function">
    <text evidence="1">DNA ligase that catalyzes the formation of phosphodiester linkages between 5'-phosphoryl and 3'-hydroxyl groups in double-stranded DNA using NAD as a coenzyme and as the energy source for the reaction. It is essential for DNA replication and repair of damaged DNA.</text>
</comment>
<comment type="catalytic activity">
    <reaction evidence="1">
        <text>NAD(+) + (deoxyribonucleotide)n-3'-hydroxyl + 5'-phospho-(deoxyribonucleotide)m = (deoxyribonucleotide)n+m + AMP + beta-nicotinamide D-nucleotide.</text>
        <dbReference type="EC" id="6.5.1.2"/>
    </reaction>
</comment>
<comment type="cofactor">
    <cofactor evidence="1">
        <name>Mg(2+)</name>
        <dbReference type="ChEBI" id="CHEBI:18420"/>
    </cofactor>
    <cofactor evidence="1">
        <name>Mn(2+)</name>
        <dbReference type="ChEBI" id="CHEBI:29035"/>
    </cofactor>
</comment>
<comment type="similarity">
    <text evidence="1">Belongs to the NAD-dependent DNA ligase family. LigA subfamily.</text>
</comment>
<organism>
    <name type="scientific">Brucella suis (strain ATCC 23445 / NCTC 10510)</name>
    <dbReference type="NCBI Taxonomy" id="470137"/>
    <lineage>
        <taxon>Bacteria</taxon>
        <taxon>Pseudomonadati</taxon>
        <taxon>Pseudomonadota</taxon>
        <taxon>Alphaproteobacteria</taxon>
        <taxon>Hyphomicrobiales</taxon>
        <taxon>Brucellaceae</taxon>
        <taxon>Brucella/Ochrobactrum group</taxon>
        <taxon>Brucella</taxon>
    </lineage>
</organism>
<evidence type="ECO:0000255" key="1">
    <source>
        <dbReference type="HAMAP-Rule" id="MF_01588"/>
    </source>
</evidence>
<reference key="1">
    <citation type="submission" date="2007-12" db="EMBL/GenBank/DDBJ databases">
        <title>Brucella suis ATCC 23445 whole genome shotgun sequencing project.</title>
        <authorList>
            <person name="Setubal J.C."/>
            <person name="Bowns C."/>
            <person name="Boyle S."/>
            <person name="Crasta O.R."/>
            <person name="Czar M.J."/>
            <person name="Dharmanolla C."/>
            <person name="Gillespie J.J."/>
            <person name="Kenyon R.W."/>
            <person name="Lu J."/>
            <person name="Mane S."/>
            <person name="Mohapatra S."/>
            <person name="Nagrani S."/>
            <person name="Purkayastha A."/>
            <person name="Rajasimha H.K."/>
            <person name="Shallom J.M."/>
            <person name="Shallom S."/>
            <person name="Shukla M."/>
            <person name="Snyder E.E."/>
            <person name="Sobral B.W."/>
            <person name="Wattam A.R."/>
            <person name="Will R."/>
            <person name="Williams K."/>
            <person name="Yoo H."/>
            <person name="Bruce D."/>
            <person name="Detter C."/>
            <person name="Munk C."/>
            <person name="Brettin T.S."/>
        </authorList>
    </citation>
    <scope>NUCLEOTIDE SEQUENCE [LARGE SCALE GENOMIC DNA]</scope>
    <source>
        <strain>ATCC 23445 / NCTC 10510</strain>
    </source>
</reference>
<feature type="chain" id="PRO_0000340331" description="DNA ligase">
    <location>
        <begin position="1"/>
        <end position="719"/>
    </location>
</feature>
<feature type="domain" description="BRCT" evidence="1">
    <location>
        <begin position="640"/>
        <end position="719"/>
    </location>
</feature>
<feature type="active site" description="N6-AMP-lysine intermediate" evidence="1">
    <location>
        <position position="128"/>
    </location>
</feature>
<feature type="binding site" evidence="1">
    <location>
        <begin position="42"/>
        <end position="46"/>
    </location>
    <ligand>
        <name>NAD(+)</name>
        <dbReference type="ChEBI" id="CHEBI:57540"/>
    </ligand>
</feature>
<feature type="binding site" evidence="1">
    <location>
        <begin position="92"/>
        <end position="93"/>
    </location>
    <ligand>
        <name>NAD(+)</name>
        <dbReference type="ChEBI" id="CHEBI:57540"/>
    </ligand>
</feature>
<feature type="binding site" evidence="1">
    <location>
        <position position="126"/>
    </location>
    <ligand>
        <name>NAD(+)</name>
        <dbReference type="ChEBI" id="CHEBI:57540"/>
    </ligand>
</feature>
<feature type="binding site" evidence="1">
    <location>
        <position position="149"/>
    </location>
    <ligand>
        <name>NAD(+)</name>
        <dbReference type="ChEBI" id="CHEBI:57540"/>
    </ligand>
</feature>
<feature type="binding site" evidence="1">
    <location>
        <position position="185"/>
    </location>
    <ligand>
        <name>NAD(+)</name>
        <dbReference type="ChEBI" id="CHEBI:57540"/>
    </ligand>
</feature>
<feature type="binding site" evidence="1">
    <location>
        <position position="301"/>
    </location>
    <ligand>
        <name>NAD(+)</name>
        <dbReference type="ChEBI" id="CHEBI:57540"/>
    </ligand>
</feature>
<feature type="binding site" evidence="1">
    <location>
        <position position="325"/>
    </location>
    <ligand>
        <name>NAD(+)</name>
        <dbReference type="ChEBI" id="CHEBI:57540"/>
    </ligand>
</feature>
<feature type="binding site" evidence="1">
    <location>
        <position position="430"/>
    </location>
    <ligand>
        <name>Zn(2+)</name>
        <dbReference type="ChEBI" id="CHEBI:29105"/>
    </ligand>
</feature>
<feature type="binding site" evidence="1">
    <location>
        <position position="433"/>
    </location>
    <ligand>
        <name>Zn(2+)</name>
        <dbReference type="ChEBI" id="CHEBI:29105"/>
    </ligand>
</feature>
<feature type="binding site" evidence="1">
    <location>
        <position position="448"/>
    </location>
    <ligand>
        <name>Zn(2+)</name>
        <dbReference type="ChEBI" id="CHEBI:29105"/>
    </ligand>
</feature>
<feature type="binding site" evidence="1">
    <location>
        <position position="454"/>
    </location>
    <ligand>
        <name>Zn(2+)</name>
        <dbReference type="ChEBI" id="CHEBI:29105"/>
    </ligand>
</feature>
<proteinExistence type="inferred from homology"/>
<keyword id="KW-0227">DNA damage</keyword>
<keyword id="KW-0234">DNA repair</keyword>
<keyword id="KW-0235">DNA replication</keyword>
<keyword id="KW-0436">Ligase</keyword>
<keyword id="KW-0460">Magnesium</keyword>
<keyword id="KW-0464">Manganese</keyword>
<keyword id="KW-0479">Metal-binding</keyword>
<keyword id="KW-0520">NAD</keyword>
<keyword id="KW-0862">Zinc</keyword>
<protein>
    <recommendedName>
        <fullName evidence="1">DNA ligase</fullName>
        <ecNumber evidence="1">6.5.1.2</ecNumber>
    </recommendedName>
    <alternativeName>
        <fullName evidence="1">Polydeoxyribonucleotide synthase [NAD(+)]</fullName>
    </alternativeName>
</protein>
<accession>B0CHK8</accession>
<name>DNLJ_BRUSI</name>